<evidence type="ECO:0000250" key="1">
    <source>
        <dbReference type="UniProtKB" id="P01137"/>
    </source>
</evidence>
<evidence type="ECO:0000250" key="2">
    <source>
        <dbReference type="UniProtKB" id="P04202"/>
    </source>
</evidence>
<evidence type="ECO:0000250" key="3">
    <source>
        <dbReference type="UniProtKB" id="P10600"/>
    </source>
</evidence>
<evidence type="ECO:0000255" key="4"/>
<evidence type="ECO:0000269" key="5">
    <source>
    </source>
</evidence>
<evidence type="ECO:0000269" key="6">
    <source>
    </source>
</evidence>
<evidence type="ECO:0000269" key="7">
    <source>
    </source>
</evidence>
<evidence type="ECO:0000269" key="8">
    <source>
    </source>
</evidence>
<evidence type="ECO:0000269" key="9">
    <source>
    </source>
</evidence>
<evidence type="ECO:0000305" key="10"/>
<evidence type="ECO:0000312" key="11">
    <source>
        <dbReference type="MGI" id="MGI:98727"/>
    </source>
</evidence>
<comment type="function">
    <text evidence="1 2">Transforming growth factor beta-3 proprotein: Precursor of the Latency-associated peptide (LAP) and Transforming growth factor beta-3 (TGF-beta-3) chains, which constitute the regulatory and active subunit of TGF-beta-3, respectively.</text>
</comment>
<comment type="function">
    <molecule>Latency-associated peptide</molecule>
    <text evidence="1 2 7">Required to maintain the Transforming growth factor beta-3 (TGF-beta-3) chain in a latent state during storage in extracellular matrix (By similarity). Associates non-covalently with TGF-beta-3 and regulates its activation via interaction with 'milieu molecules', such as LTBP1 and LRRC32/GARP, that control activation of TGF-beta-3 (PubMed:28912269). Interaction with integrins results in distortion of the Latency-associated peptide chain and subsequent release of the active TGF-beta-3 (By similarity).</text>
</comment>
<comment type="function">
    <text evidence="1 2 5 7 8 9">Transforming growth factor beta-3: Multifunctional protein that regulates embryogenesis and cell differentiation and is required in various processes such as secondary palate development (PubMed:10433915, PubMed:28912269, PubMed:7493021, PubMed:7493022). Activation into mature form follows different steps: following cleavage of the proprotein in the Golgi apparatus, Latency-associated peptide (LAP) and Transforming growth factor beta-3 (TGF-beta-3) chains remain non-covalently linked rendering TGF-beta-3 inactive during storage in extracellular matrix (By similarity). At the same time, LAP chain interacts with 'milieu molecules', such as LTBP1 and LRRC32/GARP that control activation of TGF-beta-3 and maintain it in a latent state during storage in extracellular milieus (PubMed:28912269). TGF-beta-3 is released from LAP by integrins: integrin-binding results in distortion of the LAP chain and subsequent release of the active TGF-beta-3 (By similarity). Once activated following release of LAP, TGF-beta-3 acts by binding to TGF-beta receptors (TGFBR1 and TGFBR2), which transduce signal (By similarity).</text>
</comment>
<comment type="subunit">
    <text evidence="1 2 3 7">Interacts with ASPN (By similarity). Latency-associated peptide: Homodimer; disulfide-linked (By similarity). Latency-associated peptide: Interacts with Transforming growth factor beta-3 (TGF-beta-3) chain; interaction is non-covalent and maintains (TGF-beta-3) in a latent state (By similarity). Latency-associated peptide: Interacts with LRRC32/GARP; leading to regulate activation of TGF-beta-3 and promote epithelial fusion during palate development (PubMed:28912269). Latency-associated peptide: Interacts (via cell attachment site) with integrins, leading to release of the active TGF-beta-3 (By similarity). Transforming growth factor beta-3: Homodimer; disulfide-linked (By similarity). Transforming growth factor beta-3: Interacts with TGF-beta receptors (TGFBR1 and TGFBR2), leading to signal transduction (By similarity).</text>
</comment>
<comment type="subcellular location">
    <molecule>Latency-associated peptide</molecule>
    <subcellularLocation>
        <location evidence="1">Secreted</location>
        <location evidence="1">Extracellular space</location>
        <location evidence="1">Extracellular matrix</location>
    </subcellularLocation>
</comment>
<comment type="subcellular location">
    <molecule>Transforming growth factor beta-3</molecule>
    <subcellularLocation>
        <location evidence="1">Secreted</location>
    </subcellularLocation>
</comment>
<comment type="tissue specificity">
    <text evidence="6">Expressed in mammary glands with a slight increase in expression prior to lactation and again increasing at the onset of involution, expression peaks at day 3 of involution.</text>
</comment>
<comment type="PTM">
    <text evidence="1">Transforming growth factor beta-3 proprotein: The precursor proprotein is cleaved in the Golgi apparatus to form Transforming growth factor beta-3 (TGF-beta-3) and Latency-associated peptide (LAP) chains, which remain non-covalently linked, rendering TGF-beta-3 inactive.</text>
</comment>
<comment type="PTM">
    <text evidence="3">Methylated at Gln-291 by N6AMT1.</text>
</comment>
<comment type="disruption phenotype">
    <text evidence="5 8 9">Mice display a cleft palate caused by defects in medial edge epithelial seam degeneration and palate fusion, leading to death within the first day after birth.</text>
</comment>
<comment type="similarity">
    <text evidence="10">Belongs to the TGF-beta family.</text>
</comment>
<protein>
    <recommendedName>
        <fullName>Transforming growth factor beta-3 proprotein</fullName>
    </recommendedName>
    <component>
        <recommendedName>
            <fullName>Latency-associated peptide</fullName>
            <shortName>LAP</shortName>
        </recommendedName>
    </component>
    <component>
        <recommendedName>
            <fullName>Transforming growth factor beta-3</fullName>
            <shortName>TGF-beta-3</shortName>
        </recommendedName>
    </component>
</protein>
<feature type="signal peptide" evidence="4">
    <location>
        <begin position="1"/>
        <end position="23"/>
    </location>
</feature>
<feature type="chain" id="PRO_0000033798" description="Latency-associated peptide" evidence="1">
    <location>
        <begin position="24"/>
        <end position="298"/>
    </location>
</feature>
<feature type="chain" id="PRO_0000033799" description="Transforming growth factor beta-3" evidence="1">
    <location>
        <begin position="299"/>
        <end position="410"/>
    </location>
</feature>
<feature type="short sequence motif" description="Cell attachment site" evidence="1">
    <location>
        <begin position="259"/>
        <end position="261"/>
    </location>
</feature>
<feature type="modified residue" description="N5-methylglutamine" evidence="3">
    <location>
        <position position="291"/>
    </location>
</feature>
<feature type="glycosylation site" description="N-linked (GlcNAc...) asparagine" evidence="4">
    <location>
        <position position="72"/>
    </location>
</feature>
<feature type="glycosylation site" description="N-linked (GlcNAc...) asparagine" evidence="4">
    <location>
        <position position="133"/>
    </location>
</feature>
<feature type="glycosylation site" description="N-linked (GlcNAc...) asparagine" evidence="4">
    <location>
        <position position="140"/>
    </location>
</feature>
<feature type="disulfide bond" evidence="3">
    <location>
        <begin position="305"/>
        <end position="314"/>
    </location>
</feature>
<feature type="disulfide bond" evidence="3">
    <location>
        <begin position="313"/>
        <end position="376"/>
    </location>
</feature>
<feature type="disulfide bond" evidence="3">
    <location>
        <begin position="342"/>
        <end position="407"/>
    </location>
</feature>
<feature type="disulfide bond" evidence="3">
    <location>
        <begin position="346"/>
        <end position="409"/>
    </location>
</feature>
<feature type="disulfide bond" description="Interchain" evidence="3">
    <location>
        <position position="375"/>
    </location>
</feature>
<reference key="1">
    <citation type="journal article" date="1989" name="Mol. Endocrinol.">
        <title>Complementary DNA cloning of the murine transforming growth factor-beta 3 (TGF beta 3) precursor and the comparative expression of TGF beta 3 and TGF beta 1 messenger RNA in murine embryos and adult tissues.</title>
        <authorList>
            <person name="Miller D.A."/>
            <person name="Lee A."/>
            <person name="Matsui Y."/>
            <person name="Chen E.Y."/>
            <person name="Moses H.L."/>
            <person name="Derynck R."/>
        </authorList>
    </citation>
    <scope>NUCLEOTIDE SEQUENCE [MRNA]</scope>
</reference>
<reference key="2">
    <citation type="journal article" date="1990" name="Growth Factors">
        <title>Cloning by polymerase chain reaction of a new mouse TGF-beta, mTGF-beta 3.</title>
        <authorList>
            <person name="Denhez F."/>
            <person name="Lafyatis R."/>
            <person name="Kondaiah P."/>
            <person name="Roberts A.B."/>
            <person name="Sporn M.B."/>
        </authorList>
    </citation>
    <scope>NUCLEOTIDE SEQUENCE [MRNA]</scope>
</reference>
<reference key="3">
    <citation type="journal article" date="1991" name="Cell Growth Differ.">
        <title>Cell lineage specificity of expression of the murine transforming growth factor beta 3 and transforming growth factor beta 1 genes.</title>
        <authorList>
            <person name="Watrin F."/>
            <person name="Scotto L."/>
            <person name="Assoian R.K."/>
            <person name="Wolgemuth D.J."/>
        </authorList>
    </citation>
    <scope>NUCLEOTIDE SEQUENCE [MRNA] OF 285-410</scope>
    <source>
        <tissue>Testis</tissue>
    </source>
</reference>
<reference key="4">
    <citation type="journal article" date="1995" name="Nat. Genet.">
        <title>Transforming growth factor-beta 3 is required for secondary palate fusion.</title>
        <authorList>
            <person name="Proetzel G."/>
            <person name="Pawlowski S.A."/>
            <person name="Wiles M.V."/>
            <person name="Yin M."/>
            <person name="Boivin G.P."/>
            <person name="Howles P.N."/>
            <person name="Ding J."/>
            <person name="Ferguson M.W."/>
            <person name="Doetschman T."/>
        </authorList>
    </citation>
    <scope>FUNCTION</scope>
    <scope>DISRUPTION PHENOTYPE</scope>
</reference>
<reference key="5">
    <citation type="journal article" date="1995" name="Nat. Genet.">
        <title>Abnormal lung development and cleft palate in mice lacking TGF-beta 3 indicates defects of epithelial-mesenchymal interaction.</title>
        <authorList>
            <person name="Kaartinen V."/>
            <person name="Voncken J.W."/>
            <person name="Shuler C."/>
            <person name="Warburton D."/>
            <person name="Bu D."/>
            <person name="Heisterkamp N."/>
            <person name="Groffen J."/>
        </authorList>
    </citation>
    <scope>FUNCTION</scope>
    <scope>DISRUPTION PHENOTYPE</scope>
</reference>
<reference key="6">
    <citation type="journal article" date="1999" name="Development">
        <title>Pathogenesis of cleft palate in TGF-beta3 knockout mice.</title>
        <authorList>
            <person name="Taya Y."/>
            <person name="O'Kane S."/>
            <person name="Ferguson M.W."/>
        </authorList>
    </citation>
    <scope>FUNCTION</scope>
    <scope>DISRUPTION PHENOTYPE</scope>
</reference>
<reference key="7">
    <citation type="journal article" date="2010" name="Cell Death Differ.">
        <title>TSC-22D1 isoforms have opposing roles in mammary epithelial cell survival.</title>
        <authorList>
            <person name="Huser C.A."/>
            <person name="Pringle M.A."/>
            <person name="Heath V.J."/>
            <person name="Bell A.K."/>
            <person name="Kendrick H."/>
            <person name="Smalley M.J."/>
            <person name="Crighton D."/>
            <person name="Ryan K.M."/>
            <person name="Gusterson B.A."/>
            <person name="Stein T."/>
        </authorList>
    </citation>
    <scope>TISSUE SPECIFICITY</scope>
</reference>
<reference key="8">
    <citation type="journal article" date="2017" name="J. Biol. Chem.">
        <title>Glycoprotein A repetitions predominant (GARP) positively regulates transforming growth factor (TGF) beta3 and is essential for mouse palatogenesis.</title>
        <authorList>
            <person name="Wu B.X."/>
            <person name="Li A."/>
            <person name="Lei L."/>
            <person name="Kaneko S."/>
            <person name="Wallace C."/>
            <person name="Li X."/>
            <person name="Li Z."/>
        </authorList>
    </citation>
    <scope>FUNCTION</scope>
    <scope>INTERACTION WITH LRRC32</scope>
</reference>
<accession>P17125</accession>
<dbReference type="EMBL" id="M32745">
    <property type="protein sequence ID" value="AAA40422.1"/>
    <property type="molecule type" value="mRNA"/>
</dbReference>
<dbReference type="PIR" id="A41397">
    <property type="entry name" value="A41397"/>
</dbReference>
<dbReference type="BMRB" id="P17125"/>
<dbReference type="SMR" id="P17125"/>
<dbReference type="ComplexPortal" id="CPX-825">
    <property type="entry name" value="TGF-beta-3 complex"/>
</dbReference>
<dbReference type="ComplexPortal" id="CPX-826">
    <property type="entry name" value="TGF-beta-3-TGFR complex"/>
</dbReference>
<dbReference type="FunCoup" id="P17125">
    <property type="interactions" value="89"/>
</dbReference>
<dbReference type="STRING" id="10090.ENSMUSP00000003687"/>
<dbReference type="GlyCosmos" id="P17125">
    <property type="glycosylation" value="3 sites, No reported glycans"/>
</dbReference>
<dbReference type="GlyGen" id="P17125">
    <property type="glycosylation" value="3 sites, 2 N-linked glycans (3 sites)"/>
</dbReference>
<dbReference type="iPTMnet" id="P17125"/>
<dbReference type="PhosphoSitePlus" id="P17125"/>
<dbReference type="PaxDb" id="10090-ENSMUSP00000003687"/>
<dbReference type="PeptideAtlas" id="P17125"/>
<dbReference type="ProteomicsDB" id="263041"/>
<dbReference type="Pumba" id="P17125"/>
<dbReference type="AGR" id="MGI:98727"/>
<dbReference type="MGI" id="MGI:98727">
    <property type="gene designation" value="Tgfb3"/>
</dbReference>
<dbReference type="eggNOG" id="KOG3900">
    <property type="taxonomic scope" value="Eukaryota"/>
</dbReference>
<dbReference type="InParanoid" id="P17125"/>
<dbReference type="PhylomeDB" id="P17125"/>
<dbReference type="Reactome" id="R-MMU-114608">
    <property type="pathway name" value="Platelet degranulation"/>
</dbReference>
<dbReference type="Reactome" id="R-MMU-2129379">
    <property type="pathway name" value="Molecules associated with elastic fibres"/>
</dbReference>
<dbReference type="Reactome" id="R-MMU-2173789">
    <property type="pathway name" value="TGF-beta receptor signaling activates SMADs"/>
</dbReference>
<dbReference type="ChiTaRS" id="Tgfb3">
    <property type="organism name" value="mouse"/>
</dbReference>
<dbReference type="PRO" id="PR:P17125"/>
<dbReference type="Proteomes" id="UP000000589">
    <property type="component" value="Unplaced"/>
</dbReference>
<dbReference type="RNAct" id="P17125">
    <property type="molecule type" value="protein"/>
</dbReference>
<dbReference type="GO" id="GO:0031012">
    <property type="term" value="C:extracellular matrix"/>
    <property type="evidence" value="ECO:0000314"/>
    <property type="project" value="MGI"/>
</dbReference>
<dbReference type="GO" id="GO:0005615">
    <property type="term" value="C:extracellular space"/>
    <property type="evidence" value="ECO:0007669"/>
    <property type="project" value="InterPro"/>
</dbReference>
<dbReference type="GO" id="GO:0008083">
    <property type="term" value="F:growth factor activity"/>
    <property type="evidence" value="ECO:0007669"/>
    <property type="project" value="UniProtKB-KW"/>
</dbReference>
<dbReference type="GO" id="GO:0042802">
    <property type="term" value="F:identical protein binding"/>
    <property type="evidence" value="ECO:0000250"/>
    <property type="project" value="AgBase"/>
</dbReference>
<dbReference type="GO" id="GO:0050431">
    <property type="term" value="F:transforming growth factor beta binding"/>
    <property type="evidence" value="ECO:0000250"/>
    <property type="project" value="AgBase"/>
</dbReference>
<dbReference type="GO" id="GO:0034713">
    <property type="term" value="F:type I transforming growth factor beta receptor binding"/>
    <property type="evidence" value="ECO:0000250"/>
    <property type="project" value="AgBase"/>
</dbReference>
<dbReference type="GO" id="GO:0005114">
    <property type="term" value="F:type II transforming growth factor beta receptor binding"/>
    <property type="evidence" value="ECO:0000250"/>
    <property type="project" value="AgBase"/>
</dbReference>
<dbReference type="GO" id="GO:0034714">
    <property type="term" value="F:type III transforming growth factor beta receptor binding"/>
    <property type="evidence" value="ECO:0000250"/>
    <property type="project" value="AgBase"/>
</dbReference>
<dbReference type="GO" id="GO:0009887">
    <property type="term" value="P:animal organ morphogenesis"/>
    <property type="evidence" value="ECO:0000315"/>
    <property type="project" value="MGI"/>
</dbReference>
<dbReference type="GO" id="GO:0008283">
    <property type="term" value="P:cell population proliferation"/>
    <property type="evidence" value="ECO:0000314"/>
    <property type="project" value="MGI"/>
</dbReference>
<dbReference type="GO" id="GO:0045216">
    <property type="term" value="P:cell-cell junction organization"/>
    <property type="evidence" value="ECO:0000250"/>
    <property type="project" value="AgBase"/>
</dbReference>
<dbReference type="GO" id="GO:0071363">
    <property type="term" value="P:cellular response to growth factor stimulus"/>
    <property type="evidence" value="ECO:0000314"/>
    <property type="project" value="MGI"/>
</dbReference>
<dbReference type="GO" id="GO:0070483">
    <property type="term" value="P:detection of hypoxia"/>
    <property type="evidence" value="ECO:0000250"/>
    <property type="project" value="AgBase"/>
</dbReference>
<dbReference type="GO" id="GO:0050673">
    <property type="term" value="P:epithelial cell proliferation"/>
    <property type="evidence" value="ECO:0000314"/>
    <property type="project" value="MGI"/>
</dbReference>
<dbReference type="GO" id="GO:0060325">
    <property type="term" value="P:face morphogenesis"/>
    <property type="evidence" value="ECO:0000270"/>
    <property type="project" value="UniProtKB"/>
</dbReference>
<dbReference type="GO" id="GO:0046847">
    <property type="term" value="P:filopodium assembly"/>
    <property type="evidence" value="ECO:0000315"/>
    <property type="project" value="MGI"/>
</dbReference>
<dbReference type="GO" id="GO:0010467">
    <property type="term" value="P:gene expression"/>
    <property type="evidence" value="ECO:0000315"/>
    <property type="project" value="MGI"/>
</dbReference>
<dbReference type="GO" id="GO:0001701">
    <property type="term" value="P:in utero embryonic development"/>
    <property type="evidence" value="ECO:0000315"/>
    <property type="project" value="MGI"/>
</dbReference>
<dbReference type="GO" id="GO:0048286">
    <property type="term" value="P:lung alveolus development"/>
    <property type="evidence" value="ECO:0000315"/>
    <property type="project" value="BHF-UCL"/>
</dbReference>
<dbReference type="GO" id="GO:0030879">
    <property type="term" value="P:mammary gland development"/>
    <property type="evidence" value="ECO:0000314"/>
    <property type="project" value="MGI"/>
</dbReference>
<dbReference type="GO" id="GO:0008285">
    <property type="term" value="P:negative regulation of cell population proliferation"/>
    <property type="evidence" value="ECO:0000250"/>
    <property type="project" value="AgBase"/>
</dbReference>
<dbReference type="GO" id="GO:0050680">
    <property type="term" value="P:negative regulation of epithelial cell proliferation"/>
    <property type="evidence" value="ECO:0000314"/>
    <property type="project" value="MGI"/>
</dbReference>
<dbReference type="GO" id="GO:0010936">
    <property type="term" value="P:negative regulation of macrophage cytokine production"/>
    <property type="evidence" value="ECO:0000250"/>
    <property type="project" value="AgBase"/>
</dbReference>
<dbReference type="GO" id="GO:0043524">
    <property type="term" value="P:negative regulation of neuron apoptotic process"/>
    <property type="evidence" value="ECO:0000315"/>
    <property type="project" value="MGI"/>
</dbReference>
<dbReference type="GO" id="GO:0051402">
    <property type="term" value="P:neuron apoptotic process"/>
    <property type="evidence" value="ECO:0000315"/>
    <property type="project" value="MGI"/>
</dbReference>
<dbReference type="GO" id="GO:0043065">
    <property type="term" value="P:positive regulation of apoptotic process"/>
    <property type="evidence" value="ECO:0000315"/>
    <property type="project" value="MGI"/>
</dbReference>
<dbReference type="GO" id="GO:0051781">
    <property type="term" value="P:positive regulation of cell division"/>
    <property type="evidence" value="ECO:0007669"/>
    <property type="project" value="UniProtKB-KW"/>
</dbReference>
<dbReference type="GO" id="GO:0008284">
    <property type="term" value="P:positive regulation of cell population proliferation"/>
    <property type="evidence" value="ECO:0000250"/>
    <property type="project" value="AgBase"/>
</dbReference>
<dbReference type="GO" id="GO:0032967">
    <property type="term" value="P:positive regulation of collagen biosynthetic process"/>
    <property type="evidence" value="ECO:0000250"/>
    <property type="project" value="AgBase"/>
</dbReference>
<dbReference type="GO" id="GO:0045893">
    <property type="term" value="P:positive regulation of DNA-templated transcription"/>
    <property type="evidence" value="ECO:0000315"/>
    <property type="project" value="BHF-UCL"/>
</dbReference>
<dbReference type="GO" id="GO:0010718">
    <property type="term" value="P:positive regulation of epithelial to mesenchymal transition"/>
    <property type="evidence" value="ECO:0000315"/>
    <property type="project" value="BHF-UCL"/>
</dbReference>
<dbReference type="GO" id="GO:0051491">
    <property type="term" value="P:positive regulation of filopodium assembly"/>
    <property type="evidence" value="ECO:0000315"/>
    <property type="project" value="MGI"/>
</dbReference>
<dbReference type="GO" id="GO:0010628">
    <property type="term" value="P:positive regulation of gene expression"/>
    <property type="evidence" value="ECO:0000314"/>
    <property type="project" value="UniProtKB"/>
</dbReference>
<dbReference type="GO" id="GO:0060391">
    <property type="term" value="P:positive regulation of SMAD protein signal transduction"/>
    <property type="evidence" value="ECO:0000315"/>
    <property type="project" value="BHF-UCL"/>
</dbReference>
<dbReference type="GO" id="GO:0045944">
    <property type="term" value="P:positive regulation of transcription by RNA polymerase II"/>
    <property type="evidence" value="ECO:0000316"/>
    <property type="project" value="MGI"/>
</dbReference>
<dbReference type="GO" id="GO:0001666">
    <property type="term" value="P:response to hypoxia"/>
    <property type="evidence" value="ECO:0000250"/>
    <property type="project" value="AgBase"/>
</dbReference>
<dbReference type="GO" id="GO:0032570">
    <property type="term" value="P:response to progesterone"/>
    <property type="evidence" value="ECO:0000250"/>
    <property type="project" value="AgBase"/>
</dbReference>
<dbReference type="GO" id="GO:0060021">
    <property type="term" value="P:roof of mouth development"/>
    <property type="evidence" value="ECO:0000315"/>
    <property type="project" value="MGI"/>
</dbReference>
<dbReference type="GO" id="GO:0007435">
    <property type="term" value="P:salivary gland morphogenesis"/>
    <property type="evidence" value="ECO:0000250"/>
    <property type="project" value="AgBase"/>
</dbReference>
<dbReference type="GO" id="GO:0062009">
    <property type="term" value="P:secondary palate development"/>
    <property type="evidence" value="ECO:0000315"/>
    <property type="project" value="UniProtKB"/>
</dbReference>
<dbReference type="GO" id="GO:0007179">
    <property type="term" value="P:transforming growth factor beta receptor signaling pathway"/>
    <property type="evidence" value="ECO:0000315"/>
    <property type="project" value="BHF-UCL"/>
</dbReference>
<dbReference type="CDD" id="cd19386">
    <property type="entry name" value="TGF_beta_TGFB3"/>
    <property type="match status" value="1"/>
</dbReference>
<dbReference type="FunFam" id="2.10.90.10:FF:000004">
    <property type="entry name" value="Transforming growth factor beta"/>
    <property type="match status" value="1"/>
</dbReference>
<dbReference type="FunFam" id="2.60.120.970:FF:000006">
    <property type="entry name" value="Transforming growth factor beta"/>
    <property type="match status" value="1"/>
</dbReference>
<dbReference type="Gene3D" id="2.60.120.970">
    <property type="match status" value="1"/>
</dbReference>
<dbReference type="Gene3D" id="2.10.90.10">
    <property type="entry name" value="Cystine-knot cytokines"/>
    <property type="match status" value="1"/>
</dbReference>
<dbReference type="InterPro" id="IPR029034">
    <property type="entry name" value="Cystine-knot_cytokine"/>
</dbReference>
<dbReference type="InterPro" id="IPR001839">
    <property type="entry name" value="TGF-b_C"/>
</dbReference>
<dbReference type="InterPro" id="IPR001111">
    <property type="entry name" value="TGF-b_propeptide"/>
</dbReference>
<dbReference type="InterPro" id="IPR016319">
    <property type="entry name" value="TGF-beta"/>
</dbReference>
<dbReference type="InterPro" id="IPR015615">
    <property type="entry name" value="TGF-beta-rel"/>
</dbReference>
<dbReference type="InterPro" id="IPR015618">
    <property type="entry name" value="TGFB3"/>
</dbReference>
<dbReference type="InterPro" id="IPR017948">
    <property type="entry name" value="TGFb_CS"/>
</dbReference>
<dbReference type="PANTHER" id="PTHR11848">
    <property type="entry name" value="TGF-BETA FAMILY"/>
    <property type="match status" value="1"/>
</dbReference>
<dbReference type="PANTHER" id="PTHR11848:SF34">
    <property type="entry name" value="TRANSFORMING GROWTH FACTOR BETA-3 PROPROTEIN"/>
    <property type="match status" value="1"/>
</dbReference>
<dbReference type="Pfam" id="PF00019">
    <property type="entry name" value="TGF_beta"/>
    <property type="match status" value="1"/>
</dbReference>
<dbReference type="Pfam" id="PF00688">
    <property type="entry name" value="TGFb_propeptide"/>
    <property type="match status" value="1"/>
</dbReference>
<dbReference type="PIRSF" id="PIRSF001787">
    <property type="entry name" value="TGF-beta"/>
    <property type="match status" value="1"/>
</dbReference>
<dbReference type="PRINTS" id="PR01423">
    <property type="entry name" value="TGFBETA"/>
</dbReference>
<dbReference type="PRINTS" id="PR01426">
    <property type="entry name" value="TGFBETA3"/>
</dbReference>
<dbReference type="SMART" id="SM00204">
    <property type="entry name" value="TGFB"/>
    <property type="match status" value="1"/>
</dbReference>
<dbReference type="SUPFAM" id="SSF57501">
    <property type="entry name" value="Cystine-knot cytokines"/>
    <property type="match status" value="1"/>
</dbReference>
<dbReference type="PROSITE" id="PS00250">
    <property type="entry name" value="TGF_BETA_1"/>
    <property type="match status" value="1"/>
</dbReference>
<dbReference type="PROSITE" id="PS51362">
    <property type="entry name" value="TGF_BETA_2"/>
    <property type="match status" value="1"/>
</dbReference>
<keyword id="KW-0165">Cleavage on pair of basic residues</keyword>
<keyword id="KW-1015">Disulfide bond</keyword>
<keyword id="KW-0272">Extracellular matrix</keyword>
<keyword id="KW-0325">Glycoprotein</keyword>
<keyword id="KW-0339">Growth factor</keyword>
<keyword id="KW-0488">Methylation</keyword>
<keyword id="KW-0497">Mitogen</keyword>
<keyword id="KW-1185">Reference proteome</keyword>
<keyword id="KW-0964">Secreted</keyword>
<keyword id="KW-0732">Signal</keyword>
<gene>
    <name evidence="11" type="primary">Tgfb3</name>
</gene>
<sequence>MHLQRALVVLALLNLATISLSLSTCTTLDFGHIKKKRVEAIRGQILSKLRLTSPPEPSVMTHVPYQVLALYNSTRELLEEMHGEREEGCTQETSESEYYAKEIHKFDMIQGLAEHNELAVCPKGITSKVFRFNVSSVEKNGTNLFRAEFRVLRVPNPSSKRTEQRIELFQILRPDEHIAKQRYIGGKNLPTRGTAEWLSFDVTDTVREWLLRRESNLGLEISIHCPCHTFQPNGDILENVHEVMEIKFKGVDNEDDHGRGDLGRLKKQKDHHNPHLILMMIPPHRLDSPGQGSQRKKRALDTNYCFRNLEENCCVRPLYIDFRQDLGWKWVHEPKGYYANFCSGPCPYLRSADTTHSTVLGLYNTLNPEASASPCCVPQDLEPLTILYYVGRTPKVEQLSNMVVKSCKCS</sequence>
<organism>
    <name type="scientific">Mus musculus</name>
    <name type="common">Mouse</name>
    <dbReference type="NCBI Taxonomy" id="10090"/>
    <lineage>
        <taxon>Eukaryota</taxon>
        <taxon>Metazoa</taxon>
        <taxon>Chordata</taxon>
        <taxon>Craniata</taxon>
        <taxon>Vertebrata</taxon>
        <taxon>Euteleostomi</taxon>
        <taxon>Mammalia</taxon>
        <taxon>Eutheria</taxon>
        <taxon>Euarchontoglires</taxon>
        <taxon>Glires</taxon>
        <taxon>Rodentia</taxon>
        <taxon>Myomorpha</taxon>
        <taxon>Muroidea</taxon>
        <taxon>Muridae</taxon>
        <taxon>Murinae</taxon>
        <taxon>Mus</taxon>
        <taxon>Mus</taxon>
    </lineage>
</organism>
<name>TGFB3_MOUSE</name>
<proteinExistence type="evidence at protein level"/>